<sequence length="881" mass="101221">MHLHLLFLLALCGAGCMAAGPSYSLRGSWRVSNGNSSLELPATVPGYVHSALQQHGLIQDPYYRFNDLNYRWISLDNWTYSTEFKIPFNRSEWQKVKLIFDGVDTVAEILFNNVTIGKTDNMFTRYSFDVTNVVKDVNSLKLRFQSAVQYAECQSKAHTQYRVPPECPPVEQKGECHVNFIRKEQCSFSWDWGPSFPSQGIWKDVRIEAYNIAHLDHLTFLPLYDNTSQAWTIEIEASFDVVSTKPVGGQVTIAIPELKTQQANHIELQHGQRIVKLLVKIRKDVTVETWWPHGHGNQTGYNTTILFALDGGLKIEKAAKVYFRTVQLIEEPITGSPGLSFYFKINGLPIFLKGSNWIPADSFQDKVTSELLQLLLQSAVDANMNTLRVWGGGIYEQDEFYALCDELGIMVWQDFMFASALYPTEPGFLESVRKEVTYQVRRLKSHPSVIIWSGNNENEVALRVNWFHVNPRDLGTYINDYVTLYVKTIREIVLSEDRSRPFIASSPTNGVKTMTEGWISKDPYSTQYGDMHFYDYFSDCWDWKVFPKARLVSEYGYQSWPSFSTLQKVSRQEDWSYSSRFSLHRQHHGNGNNEMLHQVQLHFQLPQRRDPVRAFKDTIYLTQVMQAQCIKTETEFYLRSRSEIVNGEGHTMGALYWQLNDIWQAPSWASLEYGGKWKMLHYFAQRFFAPLLPVGFEDEGVFYVYGVSDLHKDYPTKLTVRLHRWSSQKPLCTFVSLSAVIKAGEAMVLFQMPVSKLLKRCKECTRDTCVVSFYLSTDNELFSPTNYHFLSSLKDAKGMVKANITVSISQKGDLFVFDLKSSTSAITPFVWLDVGSIPGRFSDNGFLMIKKELSVLFYPWKPTSKSELQQAFSVTSLTDLY</sequence>
<evidence type="ECO:0000250" key="1">
    <source>
        <dbReference type="UniProtKB" id="Q8K2I4"/>
    </source>
</evidence>
<evidence type="ECO:0000250" key="2">
    <source>
        <dbReference type="UniProtKB" id="Q95327"/>
    </source>
</evidence>
<evidence type="ECO:0000255" key="3"/>
<evidence type="ECO:0000269" key="4">
    <source>
    </source>
</evidence>
<evidence type="ECO:0000303" key="5">
    <source>
    </source>
</evidence>
<evidence type="ECO:0000312" key="6">
    <source>
        <dbReference type="RGD" id="1305785"/>
    </source>
</evidence>
<name>MANBA_RAT</name>
<comment type="function">
    <text evidence="1">Exoglycosidase that cleaves the single beta-linked mannose residue from the non-reducing end of all N-linked glycoprotein oligosaccharides.</text>
</comment>
<comment type="catalytic activity">
    <reaction evidence="2">
        <text>Hydrolysis of terminal, non-reducing beta-D-mannose residues in beta-D-mannosides.</text>
        <dbReference type="EC" id="3.2.1.25"/>
    </reaction>
</comment>
<comment type="pathway">
    <text evidence="1">Glycan metabolism; N-glycan degradation.</text>
</comment>
<comment type="subunit">
    <text evidence="1">Monomer.</text>
</comment>
<comment type="subcellular location">
    <subcellularLocation>
        <location evidence="2">Lysosome</location>
    </subcellularLocation>
</comment>
<comment type="alternative products">
    <event type="alternative splicing"/>
    <isoform>
        <id>Q4FZV0-1</id>
        <name evidence="4">1</name>
        <sequence type="displayed"/>
    </isoform>
    <isoform>
        <id>Q4FZV0-2</id>
        <name evidence="4">2</name>
        <sequence type="described" ref="VSP_052170"/>
    </isoform>
</comment>
<comment type="similarity">
    <text evidence="3">Belongs to the glycosyl hydrolase 2 family.</text>
</comment>
<keyword id="KW-0025">Alternative splicing</keyword>
<keyword id="KW-1015">Disulfide bond</keyword>
<keyword id="KW-0325">Glycoprotein</keyword>
<keyword id="KW-0326">Glycosidase</keyword>
<keyword id="KW-0378">Hydrolase</keyword>
<keyword id="KW-0458">Lysosome</keyword>
<keyword id="KW-1185">Reference proteome</keyword>
<keyword id="KW-0732">Signal</keyword>
<feature type="signal peptide" evidence="3">
    <location>
        <begin position="1"/>
        <end position="18"/>
    </location>
</feature>
<feature type="chain" id="PRO_0000250614" description="Beta-mannosidase" evidence="3">
    <location>
        <begin position="19"/>
        <end position="881"/>
    </location>
</feature>
<feature type="active site" description="Proton donor" evidence="1">
    <location>
        <position position="457"/>
    </location>
</feature>
<feature type="active site" description="Nucleophile" evidence="1">
    <location>
        <position position="554"/>
    </location>
</feature>
<feature type="binding site" evidence="1">
    <location>
        <begin position="190"/>
        <end position="192"/>
    </location>
    <ligand>
        <name>substrate</name>
    </ligand>
</feature>
<feature type="binding site" evidence="1">
    <location>
        <position position="456"/>
    </location>
    <ligand>
        <name>substrate</name>
    </ligand>
</feature>
<feature type="glycosylation site" description="N-linked (GlcNAc...) asparagine" evidence="3">
    <location>
        <position position="35"/>
    </location>
</feature>
<feature type="glycosylation site" description="N-linked (GlcNAc...) asparagine" evidence="3">
    <location>
        <position position="77"/>
    </location>
</feature>
<feature type="glycosylation site" description="N-linked (GlcNAc...) asparagine" evidence="3">
    <location>
        <position position="89"/>
    </location>
</feature>
<feature type="glycosylation site" description="N-linked (GlcNAc...) asparagine" evidence="3">
    <location>
        <position position="113"/>
    </location>
</feature>
<feature type="glycosylation site" description="N-linked (GlcNAc...) asparagine" evidence="3">
    <location>
        <position position="226"/>
    </location>
</feature>
<feature type="glycosylation site" description="N-linked (GlcNAc...) asparagine" evidence="3">
    <location>
        <position position="297"/>
    </location>
</feature>
<feature type="glycosylation site" description="N-linked (GlcNAc...) asparagine" evidence="3">
    <location>
        <position position="302"/>
    </location>
</feature>
<feature type="glycosylation site" description="N-linked (GlcNAc...) asparagine" evidence="3">
    <location>
        <position position="803"/>
    </location>
</feature>
<feature type="disulfide bond" evidence="1">
    <location>
        <begin position="167"/>
        <end position="176"/>
    </location>
</feature>
<feature type="disulfide bond" evidence="1">
    <location>
        <begin position="540"/>
        <end position="629"/>
    </location>
</feature>
<feature type="disulfide bond" evidence="1">
    <location>
        <begin position="732"/>
        <end position="761"/>
    </location>
</feature>
<feature type="disulfide bond" evidence="1">
    <location>
        <begin position="764"/>
        <end position="769"/>
    </location>
</feature>
<feature type="splice variant" id="VSP_052170" description="In isoform 2." evidence="5">
    <location>
        <begin position="1"/>
        <end position="383"/>
    </location>
</feature>
<gene>
    <name evidence="6" type="primary">Manba</name>
</gene>
<protein>
    <recommendedName>
        <fullName>Beta-mannosidase</fullName>
        <ecNumber evidence="2">3.2.1.25</ecNumber>
    </recommendedName>
    <alternativeName>
        <fullName>Lysosomal beta A mannosidase</fullName>
    </alternativeName>
    <alternativeName>
        <fullName>Mannanase</fullName>
        <shortName>Mannase</shortName>
    </alternativeName>
</protein>
<dbReference type="EC" id="3.2.1.25" evidence="2"/>
<dbReference type="EMBL" id="BC099094">
    <property type="protein sequence ID" value="AAH99094.1"/>
    <property type="molecule type" value="mRNA"/>
</dbReference>
<dbReference type="EMBL" id="BC111710">
    <property type="protein sequence ID" value="AAI11711.1"/>
    <property type="molecule type" value="mRNA"/>
</dbReference>
<dbReference type="RefSeq" id="NP_001026825.1">
    <molecule id="Q4FZV0-1"/>
    <property type="nucleotide sequence ID" value="NM_001031655.2"/>
</dbReference>
<dbReference type="SMR" id="Q4FZV0"/>
<dbReference type="FunCoup" id="Q4FZV0">
    <property type="interactions" value="1538"/>
</dbReference>
<dbReference type="STRING" id="10116.ENSRNOP00000072765"/>
<dbReference type="BindingDB" id="Q4FZV0"/>
<dbReference type="ChEMBL" id="CHEMBL3431"/>
<dbReference type="CAZy" id="GH2">
    <property type="family name" value="Glycoside Hydrolase Family 2"/>
</dbReference>
<dbReference type="GlyCosmos" id="Q4FZV0">
    <property type="glycosylation" value="8 sites, No reported glycans"/>
</dbReference>
<dbReference type="GlyGen" id="Q4FZV0">
    <property type="glycosylation" value="8 sites"/>
</dbReference>
<dbReference type="PhosphoSitePlus" id="Q4FZV0"/>
<dbReference type="PaxDb" id="10116-ENSRNOP00000018202"/>
<dbReference type="Ensembl" id="ENSRNOT00000087371.2">
    <molecule id="Q4FZV0-1"/>
    <property type="protein sequence ID" value="ENSRNOP00000072765.1"/>
    <property type="gene ID" value="ENSRNOG00000052247.2"/>
</dbReference>
<dbReference type="GeneID" id="310864"/>
<dbReference type="KEGG" id="rno:310864"/>
<dbReference type="AGR" id="RGD:1305785"/>
<dbReference type="CTD" id="4126"/>
<dbReference type="RGD" id="1305785">
    <property type="gene designation" value="Manba"/>
</dbReference>
<dbReference type="eggNOG" id="KOG2230">
    <property type="taxonomic scope" value="Eukaryota"/>
</dbReference>
<dbReference type="GeneTree" id="ENSGT00390000001670"/>
<dbReference type="HOGENOM" id="CLU_005015_3_1_1"/>
<dbReference type="InParanoid" id="Q4FZV0"/>
<dbReference type="OMA" id="KRQWKGP"/>
<dbReference type="OrthoDB" id="35013at9989"/>
<dbReference type="PhylomeDB" id="Q4FZV0"/>
<dbReference type="TreeFam" id="TF105723"/>
<dbReference type="Reactome" id="R-RNO-6798695">
    <property type="pathway name" value="Neutrophil degranulation"/>
</dbReference>
<dbReference type="Reactome" id="R-RNO-8853383">
    <property type="pathway name" value="Lysosomal oligosaccharide catabolism"/>
</dbReference>
<dbReference type="SABIO-RK" id="Q4FZV0"/>
<dbReference type="UniPathway" id="UPA00280"/>
<dbReference type="PRO" id="PR:Q4FZV0"/>
<dbReference type="Proteomes" id="UP000002494">
    <property type="component" value="Chromosome 2"/>
</dbReference>
<dbReference type="Bgee" id="ENSRNOG00000052247">
    <property type="expression patterns" value="Expressed in kidney and 19 other cell types or tissues"/>
</dbReference>
<dbReference type="GO" id="GO:0005615">
    <property type="term" value="C:extracellular space"/>
    <property type="evidence" value="ECO:0000266"/>
    <property type="project" value="RGD"/>
</dbReference>
<dbReference type="GO" id="GO:0043202">
    <property type="term" value="C:lysosomal lumen"/>
    <property type="evidence" value="ECO:0000266"/>
    <property type="project" value="RGD"/>
</dbReference>
<dbReference type="GO" id="GO:0004567">
    <property type="term" value="F:beta-mannosidase activity"/>
    <property type="evidence" value="ECO:0000314"/>
    <property type="project" value="RGD"/>
</dbReference>
<dbReference type="GO" id="GO:0005537">
    <property type="term" value="F:D-mannose binding"/>
    <property type="evidence" value="ECO:0000314"/>
    <property type="project" value="RGD"/>
</dbReference>
<dbReference type="GO" id="GO:0016787">
    <property type="term" value="F:hydrolase activity"/>
    <property type="evidence" value="ECO:0000266"/>
    <property type="project" value="RGD"/>
</dbReference>
<dbReference type="GO" id="GO:0006516">
    <property type="term" value="P:glycoprotein catabolic process"/>
    <property type="evidence" value="ECO:0000250"/>
    <property type="project" value="UniProtKB"/>
</dbReference>
<dbReference type="GO" id="GO:0009313">
    <property type="term" value="P:oligosaccharide catabolic process"/>
    <property type="evidence" value="ECO:0000266"/>
    <property type="project" value="RGD"/>
</dbReference>
<dbReference type="FunFam" id="2.60.40.10:FF:000650">
    <property type="entry name" value="Mannosidase beta"/>
    <property type="match status" value="1"/>
</dbReference>
<dbReference type="FunFam" id="2.60.40.10:FF:000781">
    <property type="entry name" value="Mannosidase beta"/>
    <property type="match status" value="1"/>
</dbReference>
<dbReference type="FunFam" id="3.20.20.80:FF:000035">
    <property type="entry name" value="Mannosidase beta"/>
    <property type="match status" value="1"/>
</dbReference>
<dbReference type="FunFam" id="2.60.120.260:FF:000060">
    <property type="entry name" value="Probable beta-mannosidase"/>
    <property type="match status" value="1"/>
</dbReference>
<dbReference type="Gene3D" id="2.60.120.260">
    <property type="entry name" value="Galactose-binding domain-like"/>
    <property type="match status" value="1"/>
</dbReference>
<dbReference type="Gene3D" id="3.20.20.80">
    <property type="entry name" value="Glycosidases"/>
    <property type="match status" value="1"/>
</dbReference>
<dbReference type="Gene3D" id="2.60.40.10">
    <property type="entry name" value="Immunoglobulins"/>
    <property type="match status" value="2"/>
</dbReference>
<dbReference type="InterPro" id="IPR036156">
    <property type="entry name" value="Beta-gal/glucu_dom_sf"/>
</dbReference>
<dbReference type="InterPro" id="IPR054593">
    <property type="entry name" value="Beta-mannosidase-like_N2"/>
</dbReference>
<dbReference type="InterPro" id="IPR050887">
    <property type="entry name" value="Beta-mannosidase_GH2"/>
</dbReference>
<dbReference type="InterPro" id="IPR041625">
    <property type="entry name" value="Beta-mannosidase_Ig"/>
</dbReference>
<dbReference type="InterPro" id="IPR008979">
    <property type="entry name" value="Galactose-bd-like_sf"/>
</dbReference>
<dbReference type="InterPro" id="IPR006103">
    <property type="entry name" value="Glyco_hydro_2_cat"/>
</dbReference>
<dbReference type="InterPro" id="IPR017853">
    <property type="entry name" value="Glycoside_hydrolase_SF"/>
</dbReference>
<dbReference type="InterPro" id="IPR013783">
    <property type="entry name" value="Ig-like_fold"/>
</dbReference>
<dbReference type="InterPro" id="IPR041447">
    <property type="entry name" value="Mannosidase_ig"/>
</dbReference>
<dbReference type="PANTHER" id="PTHR43730">
    <property type="entry name" value="BETA-MANNOSIDASE"/>
    <property type="match status" value="1"/>
</dbReference>
<dbReference type="PANTHER" id="PTHR43730:SF1">
    <property type="entry name" value="BETA-MANNOSIDASE"/>
    <property type="match status" value="1"/>
</dbReference>
<dbReference type="Pfam" id="PF02836">
    <property type="entry name" value="Glyco_hydro_2_C"/>
    <property type="match status" value="1"/>
</dbReference>
<dbReference type="Pfam" id="PF22666">
    <property type="entry name" value="Glyco_hydro_2_N2"/>
    <property type="match status" value="1"/>
</dbReference>
<dbReference type="Pfam" id="PF17753">
    <property type="entry name" value="Ig_mannosidase"/>
    <property type="match status" value="1"/>
</dbReference>
<dbReference type="Pfam" id="PF17786">
    <property type="entry name" value="Mannosidase_ig"/>
    <property type="match status" value="1"/>
</dbReference>
<dbReference type="SUPFAM" id="SSF51445">
    <property type="entry name" value="(Trans)glycosidases"/>
    <property type="match status" value="1"/>
</dbReference>
<dbReference type="SUPFAM" id="SSF49303">
    <property type="entry name" value="beta-Galactosidase/glucuronidase domain"/>
    <property type="match status" value="2"/>
</dbReference>
<dbReference type="SUPFAM" id="SSF49785">
    <property type="entry name" value="Galactose-binding domain-like"/>
    <property type="match status" value="1"/>
</dbReference>
<proteinExistence type="evidence at transcript level"/>
<accession>Q4FZV0</accession>
<accession>Q2NKP5</accession>
<reference key="1">
    <citation type="journal article" date="2004" name="Genome Res.">
        <title>The status, quality, and expansion of the NIH full-length cDNA project: the Mammalian Gene Collection (MGC).</title>
        <authorList>
            <consortium name="The MGC Project Team"/>
        </authorList>
    </citation>
    <scope>NUCLEOTIDE SEQUENCE [LARGE SCALE MRNA] (ISOFORMS 1 AND 2)</scope>
    <source>
        <tissue>Placenta</tissue>
        <tissue>Thymus</tissue>
    </source>
</reference>
<organism>
    <name type="scientific">Rattus norvegicus</name>
    <name type="common">Rat</name>
    <dbReference type="NCBI Taxonomy" id="10116"/>
    <lineage>
        <taxon>Eukaryota</taxon>
        <taxon>Metazoa</taxon>
        <taxon>Chordata</taxon>
        <taxon>Craniata</taxon>
        <taxon>Vertebrata</taxon>
        <taxon>Euteleostomi</taxon>
        <taxon>Mammalia</taxon>
        <taxon>Eutheria</taxon>
        <taxon>Euarchontoglires</taxon>
        <taxon>Glires</taxon>
        <taxon>Rodentia</taxon>
        <taxon>Myomorpha</taxon>
        <taxon>Muroidea</taxon>
        <taxon>Muridae</taxon>
        <taxon>Murinae</taxon>
        <taxon>Rattus</taxon>
    </lineage>
</organism>